<sequence>GDIHGQYQDLLRLFEYGGYPPSANFLFLGDYVDRGKQSLETICLLLAYKIRYPSKIYLLRGNHEDAKINRIYGFYDECKRRFNVRLWKIFTDCFNCLPVAALIDDKILCMHGGLSPELDNLNQIREIQRPTEIPDSGLLCDLLWSDPDQKIEGWADSDRGISCTFGADKVAEFLDKNDLDLICRGHQVVEDGYEFFAKRRLVTIFSAPNYGGEFDNAGALLSVDESLVCSFEIMKPALASSSGHPLKKVPKMGKS</sequence>
<organism>
    <name type="scientific">Brassica napus</name>
    <name type="common">Rape</name>
    <dbReference type="NCBI Taxonomy" id="3708"/>
    <lineage>
        <taxon>Eukaryota</taxon>
        <taxon>Viridiplantae</taxon>
        <taxon>Streptophyta</taxon>
        <taxon>Embryophyta</taxon>
        <taxon>Tracheophyta</taxon>
        <taxon>Spermatophyta</taxon>
        <taxon>Magnoliopsida</taxon>
        <taxon>eudicotyledons</taxon>
        <taxon>Gunneridae</taxon>
        <taxon>Pentapetalae</taxon>
        <taxon>rosids</taxon>
        <taxon>malvids</taxon>
        <taxon>Brassicales</taxon>
        <taxon>Brassicaceae</taxon>
        <taxon>Brassiceae</taxon>
        <taxon>Brassica</taxon>
    </lineage>
</organism>
<comment type="catalytic activity">
    <reaction>
        <text>O-phospho-L-seryl-[protein] + H2O = L-seryl-[protein] + phosphate</text>
        <dbReference type="Rhea" id="RHEA:20629"/>
        <dbReference type="Rhea" id="RHEA-COMP:9863"/>
        <dbReference type="Rhea" id="RHEA-COMP:11604"/>
        <dbReference type="ChEBI" id="CHEBI:15377"/>
        <dbReference type="ChEBI" id="CHEBI:29999"/>
        <dbReference type="ChEBI" id="CHEBI:43474"/>
        <dbReference type="ChEBI" id="CHEBI:83421"/>
        <dbReference type="EC" id="3.1.3.16"/>
    </reaction>
</comment>
<comment type="catalytic activity">
    <reaction>
        <text>O-phospho-L-threonyl-[protein] + H2O = L-threonyl-[protein] + phosphate</text>
        <dbReference type="Rhea" id="RHEA:47004"/>
        <dbReference type="Rhea" id="RHEA-COMP:11060"/>
        <dbReference type="Rhea" id="RHEA-COMP:11605"/>
        <dbReference type="ChEBI" id="CHEBI:15377"/>
        <dbReference type="ChEBI" id="CHEBI:30013"/>
        <dbReference type="ChEBI" id="CHEBI:43474"/>
        <dbReference type="ChEBI" id="CHEBI:61977"/>
        <dbReference type="EC" id="3.1.3.16"/>
    </reaction>
</comment>
<comment type="cofactor">
    <cofactor evidence="1">
        <name>Mn(2+)</name>
        <dbReference type="ChEBI" id="CHEBI:29035"/>
    </cofactor>
    <text evidence="1">Binds 2 manganese ions per subunit.</text>
</comment>
<comment type="similarity">
    <text evidence="2">Belongs to the PPP phosphatase family. PP-1 subfamily.</text>
</comment>
<proteinExistence type="evidence at transcript level"/>
<accession>P23777</accession>
<name>PP1_BRANA</name>
<keyword id="KW-0378">Hydrolase</keyword>
<keyword id="KW-0464">Manganese</keyword>
<keyword id="KW-0479">Metal-binding</keyword>
<keyword id="KW-0904">Protein phosphatase</keyword>
<protein>
    <recommendedName>
        <fullName>Serine/threonine-protein phosphatase PP1</fullName>
        <ecNumber>3.1.3.16</ecNumber>
    </recommendedName>
</protein>
<dbReference type="EC" id="3.1.3.16"/>
<dbReference type="EMBL" id="X57438">
    <property type="protein sequence ID" value="CAA40686.1"/>
    <property type="molecule type" value="mRNA"/>
</dbReference>
<dbReference type="PIR" id="S12985">
    <property type="entry name" value="S12985"/>
</dbReference>
<dbReference type="SMR" id="P23777"/>
<dbReference type="GO" id="GO:0046872">
    <property type="term" value="F:metal ion binding"/>
    <property type="evidence" value="ECO:0007669"/>
    <property type="project" value="UniProtKB-KW"/>
</dbReference>
<dbReference type="GO" id="GO:0004722">
    <property type="term" value="F:protein serine/threonine phosphatase activity"/>
    <property type="evidence" value="ECO:0007669"/>
    <property type="project" value="UniProtKB-EC"/>
</dbReference>
<dbReference type="FunFam" id="3.60.21.10:FF:000212">
    <property type="entry name" value="Serine/threonine-protein phosphatase"/>
    <property type="match status" value="1"/>
</dbReference>
<dbReference type="Gene3D" id="3.60.21.10">
    <property type="match status" value="1"/>
</dbReference>
<dbReference type="InterPro" id="IPR004843">
    <property type="entry name" value="Calcineurin-like_PHP_ApaH"/>
</dbReference>
<dbReference type="InterPro" id="IPR029052">
    <property type="entry name" value="Metallo-depent_PP-like"/>
</dbReference>
<dbReference type="InterPro" id="IPR050341">
    <property type="entry name" value="PP1_catalytic_subunit"/>
</dbReference>
<dbReference type="InterPro" id="IPR006186">
    <property type="entry name" value="Ser/Thr-sp_prot-phosphatase"/>
</dbReference>
<dbReference type="PANTHER" id="PTHR11668">
    <property type="entry name" value="SERINE/THREONINE PROTEIN PHOSPHATASE"/>
    <property type="match status" value="1"/>
</dbReference>
<dbReference type="PANTHER" id="PTHR11668:SF432">
    <property type="entry name" value="SERINE_THREONINE-PROTEIN PHOSPHATASE PP1 ISOZYME 8"/>
    <property type="match status" value="1"/>
</dbReference>
<dbReference type="Pfam" id="PF00149">
    <property type="entry name" value="Metallophos"/>
    <property type="match status" value="1"/>
</dbReference>
<dbReference type="PRINTS" id="PR00114">
    <property type="entry name" value="STPHPHTASE"/>
</dbReference>
<dbReference type="SMART" id="SM00156">
    <property type="entry name" value="PP2Ac"/>
    <property type="match status" value="1"/>
</dbReference>
<dbReference type="SUPFAM" id="SSF56300">
    <property type="entry name" value="Metallo-dependent phosphatases"/>
    <property type="match status" value="1"/>
</dbReference>
<dbReference type="PROSITE" id="PS00125">
    <property type="entry name" value="SER_THR_PHOSPHATASE"/>
    <property type="match status" value="1"/>
</dbReference>
<evidence type="ECO:0000250" key="1"/>
<evidence type="ECO:0000305" key="2"/>
<feature type="chain" id="PRO_0000058805" description="Serine/threonine-protein phosphatase PP1">
    <location>
        <begin position="1" status="less than"/>
        <end position="255"/>
    </location>
</feature>
<feature type="active site" description="Proton donor" evidence="1">
    <location>
        <position position="63"/>
    </location>
</feature>
<feature type="binding site" evidence="1">
    <location>
        <position position="2"/>
    </location>
    <ligand>
        <name>Mn(2+)</name>
        <dbReference type="ChEBI" id="CHEBI:29035"/>
        <label>1</label>
    </ligand>
</feature>
<feature type="binding site" evidence="1">
    <location>
        <position position="4"/>
    </location>
    <ligand>
        <name>Mn(2+)</name>
        <dbReference type="ChEBI" id="CHEBI:29035"/>
        <label>1</label>
    </ligand>
</feature>
<feature type="binding site" evidence="1">
    <location>
        <position position="30"/>
    </location>
    <ligand>
        <name>Mn(2+)</name>
        <dbReference type="ChEBI" id="CHEBI:29035"/>
        <label>1</label>
    </ligand>
</feature>
<feature type="binding site" evidence="1">
    <location>
        <position position="30"/>
    </location>
    <ligand>
        <name>Mn(2+)</name>
        <dbReference type="ChEBI" id="CHEBI:29035"/>
        <label>2</label>
    </ligand>
</feature>
<feature type="binding site" evidence="1">
    <location>
        <position position="62"/>
    </location>
    <ligand>
        <name>Mn(2+)</name>
        <dbReference type="ChEBI" id="CHEBI:29035"/>
        <label>2</label>
    </ligand>
</feature>
<feature type="binding site" evidence="1">
    <location>
        <position position="111"/>
    </location>
    <ligand>
        <name>Mn(2+)</name>
        <dbReference type="ChEBI" id="CHEBI:29035"/>
        <label>2</label>
    </ligand>
</feature>
<feature type="binding site" evidence="1">
    <location>
        <position position="186"/>
    </location>
    <ligand>
        <name>Mn(2+)</name>
        <dbReference type="ChEBI" id="CHEBI:29035"/>
        <label>2</label>
    </ligand>
</feature>
<feature type="non-terminal residue">
    <location>
        <position position="1"/>
    </location>
</feature>
<reference key="1">
    <citation type="journal article" date="1990" name="FEBS Lett.">
        <title>Identification by molecular cloning of two cDNA sequences from the plant Brassica napus which are very similar to mammalian protein phosphatases-1 and -2A.</title>
        <authorList>
            <person name="Mackintosh R.W."/>
            <person name="Haycox G."/>
            <person name="Hardie D.G."/>
            <person name="Cohen P.T.W."/>
        </authorList>
    </citation>
    <scope>NUCLEOTIDE SEQUENCE [MRNA]</scope>
</reference>